<gene>
    <name evidence="1" type="primary">queG</name>
    <name type="ordered locus">Syncc9605_0007</name>
</gene>
<evidence type="ECO:0000255" key="1">
    <source>
        <dbReference type="HAMAP-Rule" id="MF_00916"/>
    </source>
</evidence>
<protein>
    <recommendedName>
        <fullName evidence="1">Epoxyqueuosine reductase</fullName>
        <ecNumber evidence="1">1.17.99.6</ecNumber>
    </recommendedName>
    <alternativeName>
        <fullName evidence="1">Queuosine biosynthesis protein QueG</fullName>
    </alternativeName>
</protein>
<feature type="chain" id="PRO_0000416083" description="Epoxyqueuosine reductase">
    <location>
        <begin position="1"/>
        <end position="321"/>
    </location>
</feature>
<feature type="domain" description="4Fe-4S ferredoxin-type" evidence="1">
    <location>
        <begin position="179"/>
        <end position="211"/>
    </location>
</feature>
<feature type="active site" description="Proton donor" evidence="1">
    <location>
        <position position="137"/>
    </location>
</feature>
<feature type="binding site" evidence="1">
    <location>
        <position position="191"/>
    </location>
    <ligand>
        <name>[4Fe-4S] cluster</name>
        <dbReference type="ChEBI" id="CHEBI:49883"/>
        <label>1</label>
    </ligand>
</feature>
<feature type="binding site" evidence="1">
    <location>
        <position position="194"/>
    </location>
    <ligand>
        <name>[4Fe-4S] cluster</name>
        <dbReference type="ChEBI" id="CHEBI:49883"/>
        <label>1</label>
    </ligand>
</feature>
<feature type="binding site" evidence="1">
    <location>
        <position position="197"/>
    </location>
    <ligand>
        <name>[4Fe-4S] cluster</name>
        <dbReference type="ChEBI" id="CHEBI:49883"/>
        <label>1</label>
    </ligand>
</feature>
<feature type="binding site" evidence="1">
    <location>
        <position position="201"/>
    </location>
    <ligand>
        <name>[4Fe-4S] cluster</name>
        <dbReference type="ChEBI" id="CHEBI:49883"/>
        <label>2</label>
    </ligand>
</feature>
<feature type="binding site" evidence="1">
    <location>
        <position position="217"/>
    </location>
    <ligand>
        <name>[4Fe-4S] cluster</name>
        <dbReference type="ChEBI" id="CHEBI:49883"/>
        <label>2</label>
    </ligand>
</feature>
<feature type="binding site" evidence="1">
    <location>
        <position position="245"/>
    </location>
    <ligand>
        <name>[4Fe-4S] cluster</name>
        <dbReference type="ChEBI" id="CHEBI:49883"/>
        <label>2</label>
    </ligand>
</feature>
<feature type="binding site" evidence="1">
    <location>
        <position position="248"/>
    </location>
    <ligand>
        <name>[4Fe-4S] cluster</name>
        <dbReference type="ChEBI" id="CHEBI:49883"/>
        <label>2</label>
    </ligand>
</feature>
<feature type="binding site" evidence="1">
    <location>
        <position position="252"/>
    </location>
    <ligand>
        <name>[4Fe-4S] cluster</name>
        <dbReference type="ChEBI" id="CHEBI:49883"/>
        <label>1</label>
    </ligand>
</feature>
<accession>Q3ANP3</accession>
<keyword id="KW-0004">4Fe-4S</keyword>
<keyword id="KW-0963">Cytoplasm</keyword>
<keyword id="KW-0408">Iron</keyword>
<keyword id="KW-0411">Iron-sulfur</keyword>
<keyword id="KW-0479">Metal-binding</keyword>
<keyword id="KW-0560">Oxidoreductase</keyword>
<keyword id="KW-0671">Queuosine biosynthesis</keyword>
<keyword id="KW-0819">tRNA processing</keyword>
<proteinExistence type="inferred from homology"/>
<comment type="function">
    <text evidence="1">Catalyzes the conversion of epoxyqueuosine (oQ) to queuosine (Q), which is a hypermodified base found in the wobble positions of tRNA(Asp), tRNA(Asn), tRNA(His) and tRNA(Tyr).</text>
</comment>
<comment type="catalytic activity">
    <reaction evidence="1">
        <text>epoxyqueuosine(34) in tRNA + AH2 = queuosine(34) in tRNA + A + H2O</text>
        <dbReference type="Rhea" id="RHEA:32159"/>
        <dbReference type="Rhea" id="RHEA-COMP:18571"/>
        <dbReference type="Rhea" id="RHEA-COMP:18582"/>
        <dbReference type="ChEBI" id="CHEBI:13193"/>
        <dbReference type="ChEBI" id="CHEBI:15377"/>
        <dbReference type="ChEBI" id="CHEBI:17499"/>
        <dbReference type="ChEBI" id="CHEBI:194431"/>
        <dbReference type="ChEBI" id="CHEBI:194443"/>
        <dbReference type="EC" id="1.17.99.6"/>
    </reaction>
</comment>
<comment type="cofactor">
    <cofactor evidence="1">
        <name>cob(II)alamin</name>
        <dbReference type="ChEBI" id="CHEBI:16304"/>
    </cofactor>
</comment>
<comment type="cofactor">
    <cofactor evidence="1">
        <name>[4Fe-4S] cluster</name>
        <dbReference type="ChEBI" id="CHEBI:49883"/>
    </cofactor>
    <text evidence="1">Binds 2 [4Fe-4S] clusters per monomer.</text>
</comment>
<comment type="pathway">
    <text evidence="1">tRNA modification; tRNA-queuosine biosynthesis.</text>
</comment>
<comment type="subunit">
    <text evidence="1">Monomer.</text>
</comment>
<comment type="subcellular location">
    <subcellularLocation>
        <location evidence="1">Cytoplasm</location>
    </subcellularLocation>
</comment>
<comment type="similarity">
    <text evidence="1">Belongs to the QueG family.</text>
</comment>
<name>QUEG_SYNSC</name>
<reference key="1">
    <citation type="submission" date="2005-07" db="EMBL/GenBank/DDBJ databases">
        <title>Complete sequence of Synechococcus sp. CC9605.</title>
        <authorList>
            <consortium name="US DOE Joint Genome Institute"/>
            <person name="Copeland A."/>
            <person name="Lucas S."/>
            <person name="Lapidus A."/>
            <person name="Barry K."/>
            <person name="Detter J.C."/>
            <person name="Glavina T."/>
            <person name="Hammon N."/>
            <person name="Israni S."/>
            <person name="Pitluck S."/>
            <person name="Schmutz J."/>
            <person name="Martinez M."/>
            <person name="Larimer F."/>
            <person name="Land M."/>
            <person name="Kyrpides N."/>
            <person name="Ivanova N."/>
            <person name="Richardson P."/>
        </authorList>
    </citation>
    <scope>NUCLEOTIDE SEQUENCE [LARGE SCALE GENOMIC DNA]</scope>
    <source>
        <strain>CC9605</strain>
    </source>
</reference>
<sequence>MQGHVTDQQTRLSEALKRRAAEEGFNPVGIARIPGSPRLQLRTKALQRWLDHGHQADMAWMAAPRRRDPRLLLDGANSVLAVGLNYYVDAQPSPGSLKVARYGWGRDYHRVVDQRLRRIGRWLSEQRPDCGWRACVDATPLLDKAWAEEAGLGWIGKHSNLIHPERGSWMVIGHLLTTEPLNADPPARSLCGRCSACIDACPTHAIREPFVVDARRCLAFHTIENREDDLPENIRAALGSWVAGCDICQDVCPWNHRSLPQSNDPDMQPRPWLLNLHKEEIQTWDDSVWEQKLRGSALRRIKPWMWRRNAAAAQPDPTPTL</sequence>
<organism>
    <name type="scientific">Synechococcus sp. (strain CC9605)</name>
    <dbReference type="NCBI Taxonomy" id="110662"/>
    <lineage>
        <taxon>Bacteria</taxon>
        <taxon>Bacillati</taxon>
        <taxon>Cyanobacteriota</taxon>
        <taxon>Cyanophyceae</taxon>
        <taxon>Synechococcales</taxon>
        <taxon>Synechococcaceae</taxon>
        <taxon>Synechococcus</taxon>
    </lineage>
</organism>
<dbReference type="EC" id="1.17.99.6" evidence="1"/>
<dbReference type="EMBL" id="CP000110">
    <property type="protein sequence ID" value="ABB33789.1"/>
    <property type="molecule type" value="Genomic_DNA"/>
</dbReference>
<dbReference type="RefSeq" id="WP_011363051.1">
    <property type="nucleotide sequence ID" value="NC_007516.1"/>
</dbReference>
<dbReference type="SMR" id="Q3ANP3"/>
<dbReference type="STRING" id="110662.Syncc9605_0007"/>
<dbReference type="KEGG" id="syd:Syncc9605_0007"/>
<dbReference type="eggNOG" id="COG1600">
    <property type="taxonomic scope" value="Bacteria"/>
</dbReference>
<dbReference type="HOGENOM" id="CLU_030790_0_0_3"/>
<dbReference type="OrthoDB" id="9784571at2"/>
<dbReference type="UniPathway" id="UPA00392"/>
<dbReference type="GO" id="GO:0005737">
    <property type="term" value="C:cytoplasm"/>
    <property type="evidence" value="ECO:0007669"/>
    <property type="project" value="UniProtKB-SubCell"/>
</dbReference>
<dbReference type="GO" id="GO:0051539">
    <property type="term" value="F:4 iron, 4 sulfur cluster binding"/>
    <property type="evidence" value="ECO:0007669"/>
    <property type="project" value="UniProtKB-KW"/>
</dbReference>
<dbReference type="GO" id="GO:0052693">
    <property type="term" value="F:epoxyqueuosine reductase activity"/>
    <property type="evidence" value="ECO:0007669"/>
    <property type="project" value="UniProtKB-UniRule"/>
</dbReference>
<dbReference type="GO" id="GO:0046872">
    <property type="term" value="F:metal ion binding"/>
    <property type="evidence" value="ECO:0007669"/>
    <property type="project" value="UniProtKB-KW"/>
</dbReference>
<dbReference type="GO" id="GO:0008616">
    <property type="term" value="P:queuosine biosynthetic process"/>
    <property type="evidence" value="ECO:0007669"/>
    <property type="project" value="UniProtKB-UniRule"/>
</dbReference>
<dbReference type="GO" id="GO:0006400">
    <property type="term" value="P:tRNA modification"/>
    <property type="evidence" value="ECO:0007669"/>
    <property type="project" value="UniProtKB-UniRule"/>
</dbReference>
<dbReference type="Gene3D" id="3.30.70.20">
    <property type="match status" value="1"/>
</dbReference>
<dbReference type="HAMAP" id="MF_00916">
    <property type="entry name" value="QueG"/>
    <property type="match status" value="1"/>
</dbReference>
<dbReference type="InterPro" id="IPR017896">
    <property type="entry name" value="4Fe4S_Fe-S-bd"/>
</dbReference>
<dbReference type="InterPro" id="IPR017900">
    <property type="entry name" value="4Fe4S_Fe_S_CS"/>
</dbReference>
<dbReference type="InterPro" id="IPR004453">
    <property type="entry name" value="QueG"/>
</dbReference>
<dbReference type="InterPro" id="IPR013542">
    <property type="entry name" value="QueG_DUF1730"/>
</dbReference>
<dbReference type="NCBIfam" id="TIGR00276">
    <property type="entry name" value="tRNA epoxyqueuosine(34) reductase QueG"/>
    <property type="match status" value="1"/>
</dbReference>
<dbReference type="PANTHER" id="PTHR30002">
    <property type="entry name" value="EPOXYQUEUOSINE REDUCTASE"/>
    <property type="match status" value="1"/>
</dbReference>
<dbReference type="PANTHER" id="PTHR30002:SF4">
    <property type="entry name" value="EPOXYQUEUOSINE REDUCTASE"/>
    <property type="match status" value="1"/>
</dbReference>
<dbReference type="Pfam" id="PF13484">
    <property type="entry name" value="Fer4_16"/>
    <property type="match status" value="1"/>
</dbReference>
<dbReference type="Pfam" id="PF08331">
    <property type="entry name" value="QueG_DUF1730"/>
    <property type="match status" value="1"/>
</dbReference>
<dbReference type="SUPFAM" id="SSF46548">
    <property type="entry name" value="alpha-helical ferredoxin"/>
    <property type="match status" value="1"/>
</dbReference>
<dbReference type="PROSITE" id="PS00198">
    <property type="entry name" value="4FE4S_FER_1"/>
    <property type="match status" value="1"/>
</dbReference>
<dbReference type="PROSITE" id="PS51379">
    <property type="entry name" value="4FE4S_FER_2"/>
    <property type="match status" value="1"/>
</dbReference>